<gene>
    <name type="primary">Cmpk2</name>
    <name type="synonym">Tyki</name>
</gene>
<proteinExistence type="evidence at protein level"/>
<reference key="1">
    <citation type="journal article" date="2005" name="Science">
        <title>The transcriptional landscape of the mammalian genome.</title>
        <authorList>
            <person name="Carninci P."/>
            <person name="Kasukawa T."/>
            <person name="Katayama S."/>
            <person name="Gough J."/>
            <person name="Frith M.C."/>
            <person name="Maeda N."/>
            <person name="Oyama R."/>
            <person name="Ravasi T."/>
            <person name="Lenhard B."/>
            <person name="Wells C."/>
            <person name="Kodzius R."/>
            <person name="Shimokawa K."/>
            <person name="Bajic V.B."/>
            <person name="Brenner S.E."/>
            <person name="Batalov S."/>
            <person name="Forrest A.R."/>
            <person name="Zavolan M."/>
            <person name="Davis M.J."/>
            <person name="Wilming L.G."/>
            <person name="Aidinis V."/>
            <person name="Allen J.E."/>
            <person name="Ambesi-Impiombato A."/>
            <person name="Apweiler R."/>
            <person name="Aturaliya R.N."/>
            <person name="Bailey T.L."/>
            <person name="Bansal M."/>
            <person name="Baxter L."/>
            <person name="Beisel K.W."/>
            <person name="Bersano T."/>
            <person name="Bono H."/>
            <person name="Chalk A.M."/>
            <person name="Chiu K.P."/>
            <person name="Choudhary V."/>
            <person name="Christoffels A."/>
            <person name="Clutterbuck D.R."/>
            <person name="Crowe M.L."/>
            <person name="Dalla E."/>
            <person name="Dalrymple B.P."/>
            <person name="de Bono B."/>
            <person name="Della Gatta G."/>
            <person name="di Bernardo D."/>
            <person name="Down T."/>
            <person name="Engstrom P."/>
            <person name="Fagiolini M."/>
            <person name="Faulkner G."/>
            <person name="Fletcher C.F."/>
            <person name="Fukushima T."/>
            <person name="Furuno M."/>
            <person name="Futaki S."/>
            <person name="Gariboldi M."/>
            <person name="Georgii-Hemming P."/>
            <person name="Gingeras T.R."/>
            <person name="Gojobori T."/>
            <person name="Green R.E."/>
            <person name="Gustincich S."/>
            <person name="Harbers M."/>
            <person name="Hayashi Y."/>
            <person name="Hensch T.K."/>
            <person name="Hirokawa N."/>
            <person name="Hill D."/>
            <person name="Huminiecki L."/>
            <person name="Iacono M."/>
            <person name="Ikeo K."/>
            <person name="Iwama A."/>
            <person name="Ishikawa T."/>
            <person name="Jakt M."/>
            <person name="Kanapin A."/>
            <person name="Katoh M."/>
            <person name="Kawasawa Y."/>
            <person name="Kelso J."/>
            <person name="Kitamura H."/>
            <person name="Kitano H."/>
            <person name="Kollias G."/>
            <person name="Krishnan S.P."/>
            <person name="Kruger A."/>
            <person name="Kummerfeld S.K."/>
            <person name="Kurochkin I.V."/>
            <person name="Lareau L.F."/>
            <person name="Lazarevic D."/>
            <person name="Lipovich L."/>
            <person name="Liu J."/>
            <person name="Liuni S."/>
            <person name="McWilliam S."/>
            <person name="Madan Babu M."/>
            <person name="Madera M."/>
            <person name="Marchionni L."/>
            <person name="Matsuda H."/>
            <person name="Matsuzawa S."/>
            <person name="Miki H."/>
            <person name="Mignone F."/>
            <person name="Miyake S."/>
            <person name="Morris K."/>
            <person name="Mottagui-Tabar S."/>
            <person name="Mulder N."/>
            <person name="Nakano N."/>
            <person name="Nakauchi H."/>
            <person name="Ng P."/>
            <person name="Nilsson R."/>
            <person name="Nishiguchi S."/>
            <person name="Nishikawa S."/>
            <person name="Nori F."/>
            <person name="Ohara O."/>
            <person name="Okazaki Y."/>
            <person name="Orlando V."/>
            <person name="Pang K.C."/>
            <person name="Pavan W.J."/>
            <person name="Pavesi G."/>
            <person name="Pesole G."/>
            <person name="Petrovsky N."/>
            <person name="Piazza S."/>
            <person name="Reed J."/>
            <person name="Reid J.F."/>
            <person name="Ring B.Z."/>
            <person name="Ringwald M."/>
            <person name="Rost B."/>
            <person name="Ruan Y."/>
            <person name="Salzberg S.L."/>
            <person name="Sandelin A."/>
            <person name="Schneider C."/>
            <person name="Schoenbach C."/>
            <person name="Sekiguchi K."/>
            <person name="Semple C.A."/>
            <person name="Seno S."/>
            <person name="Sessa L."/>
            <person name="Sheng Y."/>
            <person name="Shibata Y."/>
            <person name="Shimada H."/>
            <person name="Shimada K."/>
            <person name="Silva D."/>
            <person name="Sinclair B."/>
            <person name="Sperling S."/>
            <person name="Stupka E."/>
            <person name="Sugiura K."/>
            <person name="Sultana R."/>
            <person name="Takenaka Y."/>
            <person name="Taki K."/>
            <person name="Tammoja K."/>
            <person name="Tan S.L."/>
            <person name="Tang S."/>
            <person name="Taylor M.S."/>
            <person name="Tegner J."/>
            <person name="Teichmann S.A."/>
            <person name="Ueda H.R."/>
            <person name="van Nimwegen E."/>
            <person name="Verardo R."/>
            <person name="Wei C.L."/>
            <person name="Yagi K."/>
            <person name="Yamanishi H."/>
            <person name="Zabarovsky E."/>
            <person name="Zhu S."/>
            <person name="Zimmer A."/>
            <person name="Hide W."/>
            <person name="Bult C."/>
            <person name="Grimmond S.M."/>
            <person name="Teasdale R.D."/>
            <person name="Liu E.T."/>
            <person name="Brusic V."/>
            <person name="Quackenbush J."/>
            <person name="Wahlestedt C."/>
            <person name="Mattick J.S."/>
            <person name="Hume D.A."/>
            <person name="Kai C."/>
            <person name="Sasaki D."/>
            <person name="Tomaru Y."/>
            <person name="Fukuda S."/>
            <person name="Kanamori-Katayama M."/>
            <person name="Suzuki M."/>
            <person name="Aoki J."/>
            <person name="Arakawa T."/>
            <person name="Iida J."/>
            <person name="Imamura K."/>
            <person name="Itoh M."/>
            <person name="Kato T."/>
            <person name="Kawaji H."/>
            <person name="Kawagashira N."/>
            <person name="Kawashima T."/>
            <person name="Kojima M."/>
            <person name="Kondo S."/>
            <person name="Konno H."/>
            <person name="Nakano K."/>
            <person name="Ninomiya N."/>
            <person name="Nishio T."/>
            <person name="Okada M."/>
            <person name="Plessy C."/>
            <person name="Shibata K."/>
            <person name="Shiraki T."/>
            <person name="Suzuki S."/>
            <person name="Tagami M."/>
            <person name="Waki K."/>
            <person name="Watahiki A."/>
            <person name="Okamura-Oho Y."/>
            <person name="Suzuki H."/>
            <person name="Kawai J."/>
            <person name="Hayashizaki Y."/>
        </authorList>
    </citation>
    <scope>NUCLEOTIDE SEQUENCE [LARGE SCALE MRNA]</scope>
    <source>
        <strain>C57BL/6J</strain>
        <tissue>Bone marrow</tissue>
        <tissue>Lung</tissue>
    </source>
</reference>
<reference key="2">
    <citation type="journal article" date="2004" name="Genome Res.">
        <title>The status, quality, and expansion of the NIH full-length cDNA project: the Mammalian Gene Collection (MGC).</title>
        <authorList>
            <consortium name="The MGC Project Team"/>
        </authorList>
    </citation>
    <scope>NUCLEOTIDE SEQUENCE [LARGE SCALE MRNA]</scope>
    <source>
        <strain>C57BL/6J</strain>
        <strain>Czech II</strain>
        <tissue>Mammary tumor</tissue>
    </source>
</reference>
<reference key="3">
    <citation type="journal article" date="1995" name="J. Immunol.">
        <title>A unique member of the thymidylate kinase family that is induced during macrophage activation.</title>
        <authorList>
            <person name="Lee C.G.L."/>
            <person name="O'Brien W.E."/>
        </authorList>
    </citation>
    <scope>PRELIMINARY PARTIAL NUCLEOTIDE SEQUENCE [MRNA]</scope>
    <scope>INDUCTION</scope>
    <source>
        <strain>BALB/cJ</strain>
    </source>
</reference>
<reference key="4">
    <citation type="journal article" date="2006" name="J. Neuroimmunol.">
        <title>The dynamics of the LPS triggered inflammatory response of murine microglia under different culture and in vivo conditions.</title>
        <authorList>
            <person name="Lund S."/>
            <person name="Christensen K.V."/>
            <person name="Hedtjarn M."/>
            <person name="Mortensen A.L."/>
            <person name="Hagberg H."/>
            <person name="Falsig J."/>
            <person name="Hasseldam H."/>
            <person name="Schrattenholz A."/>
            <person name="Poerzgen P."/>
            <person name="Leist M."/>
        </authorList>
    </citation>
    <scope>INDUCTION</scope>
</reference>
<reference key="5">
    <citation type="journal article" date="2010" name="Cell">
        <title>A tissue-specific atlas of mouse protein phosphorylation and expression.</title>
        <authorList>
            <person name="Huttlin E.L."/>
            <person name="Jedrychowski M.P."/>
            <person name="Elias J.E."/>
            <person name="Goswami T."/>
            <person name="Rad R."/>
            <person name="Beausoleil S.A."/>
            <person name="Villen J."/>
            <person name="Haas W."/>
            <person name="Sowa M.E."/>
            <person name="Gygi S.P."/>
        </authorList>
    </citation>
    <scope>IDENTIFICATION BY MASS SPECTROMETRY [LARGE SCALE ANALYSIS]</scope>
    <source>
        <tissue>Brain</tissue>
        <tissue>Brown adipose tissue</tissue>
        <tissue>Heart</tissue>
        <tissue>Kidney</tissue>
        <tissue>Lung</tissue>
        <tissue>Pancreas</tissue>
        <tissue>Spleen</tissue>
    </source>
</reference>
<reference key="6">
    <citation type="journal article" date="2018" name="Nature">
        <title>New mitochondrial DNA synthesis enables NLRP3 inflammasome activation.</title>
        <authorList>
            <person name="Zhong Z."/>
            <person name="Liang S."/>
            <person name="Sanchez-Lopez E."/>
            <person name="He F."/>
            <person name="Shalapour S."/>
            <person name="Lin X.J."/>
            <person name="Wong J."/>
            <person name="Ding S."/>
            <person name="Seki E."/>
            <person name="Schnabl B."/>
            <person name="Hevener A.L."/>
            <person name="Greenberg H.B."/>
            <person name="Kisseleva T."/>
            <person name="Karin M."/>
        </authorList>
    </citation>
    <scope>FUNCTION</scope>
    <scope>MUTAGENESIS OF ASP-330</scope>
</reference>
<reference key="7">
    <citation type="journal article" date="2022" name="Cell Discov.">
        <title>Loss of function of CMPK2 causes mitochondria deficiency and brain calcification.</title>
        <authorList>
            <person name="Zhao M."/>
            <person name="Su H.Z."/>
            <person name="Zeng Y.H."/>
            <person name="Sun Y."/>
            <person name="Guo X.X."/>
            <person name="Li Y.L."/>
            <person name="Wang C."/>
            <person name="Zhao Z.Y."/>
            <person name="Huang X.J."/>
            <person name="Lin K.J."/>
            <person name="Ye Z.L."/>
            <person name="Lin B.W."/>
            <person name="Hong S."/>
            <person name="Zheng J."/>
            <person name="Liu Y.B."/>
            <person name="Yao X.P."/>
            <person name="Yang D."/>
            <person name="Lu Y.Q."/>
            <person name="Chen H.Z."/>
            <person name="Zuo E."/>
            <person name="Yang G."/>
            <person name="Wang H.T."/>
            <person name="Huang C.W."/>
            <person name="Lin X.H."/>
            <person name="Cen Z."/>
            <person name="Lai L.L."/>
            <person name="Zhang Y.K."/>
            <person name="Li X."/>
            <person name="Lai T."/>
            <person name="Lin J."/>
            <person name="Zuo D.D."/>
            <person name="Lin M.T."/>
            <person name="Liou C.W."/>
            <person name="Kong Q.X."/>
            <person name="Yan C.Z."/>
            <person name="Xiong Z.Q."/>
            <person name="Wang N."/>
            <person name="Luo W."/>
            <person name="Zhao C.P."/>
            <person name="Cheng X."/>
            <person name="Chen W.J."/>
        </authorList>
    </citation>
    <scope>FUNCTION</scope>
    <scope>DISRUPTION PHENOTYPE</scope>
    <scope>TISSUE SPECIFICITY</scope>
    <scope>SUBCELLULAR LOCATION</scope>
</reference>
<keyword id="KW-0067">ATP-binding</keyword>
<keyword id="KW-0175">Coiled coil</keyword>
<keyword id="KW-0418">Kinase</keyword>
<keyword id="KW-0496">Mitochondrion</keyword>
<keyword id="KW-0547">Nucleotide-binding</keyword>
<keyword id="KW-0665">Pyrimidine biosynthesis</keyword>
<keyword id="KW-1185">Reference proteome</keyword>
<keyword id="KW-0808">Transferase</keyword>
<keyword id="KW-0809">Transit peptide</keyword>
<comment type="function">
    <text evidence="1 4 5">Mitochondrial nucleotide monophosphate kinase needed for salvage dNTP synthesis that mediates immunomodulatory and antiviral activities through IFN-dependent and IFN-independent pathways. Restricts the replication of multiple viruses including flaviviruses or coronaviruses. Together with viperin/RSAD2 and ddhCTP, suppresses the replication of several coronaviruses through inhibition of the viral RNA-dependent RNA polymerase activities (By similarity). Concerning flaviviruses, restricts RNA translation when localized to the mitochondria independently of its kinase activity (By similarity). Is able to phosphorylate dUMP, dCMP, CMP, UMP and monophosphates of the pyrimidine nucleoside analogs ddC, dFdC, araC, BVDU and FdUrd with ATP as phosphate donor. Efficacy is highest for dUMP followed by dCMP while CMP and UMP are poor substrates. Controls therefore mitochondrial DNA synthesis by supplying required deoxyribonucleotides (PubMed:36443312). CMPK2-dependent mitochondrial DNA synthesis is necessary for the production of oxidized mitochondrial DNA fragments after exposure to NLRP3 activators (PubMed:30046112). In turn, cytosolic oxidized mtDNA associates with the NLRP3 inflammasome complex and is required for its activation (PubMed:30046112).</text>
</comment>
<comment type="catalytic activity">
    <reaction>
        <text>CMP + ATP = CDP + ADP</text>
        <dbReference type="Rhea" id="RHEA:11600"/>
        <dbReference type="ChEBI" id="CHEBI:30616"/>
        <dbReference type="ChEBI" id="CHEBI:58069"/>
        <dbReference type="ChEBI" id="CHEBI:60377"/>
        <dbReference type="ChEBI" id="CHEBI:456216"/>
        <dbReference type="EC" id="2.7.4.14"/>
    </reaction>
</comment>
<comment type="catalytic activity">
    <reaction>
        <text>dCMP + ATP = dCDP + ADP</text>
        <dbReference type="Rhea" id="RHEA:25094"/>
        <dbReference type="ChEBI" id="CHEBI:30616"/>
        <dbReference type="ChEBI" id="CHEBI:57566"/>
        <dbReference type="ChEBI" id="CHEBI:58593"/>
        <dbReference type="ChEBI" id="CHEBI:456216"/>
        <dbReference type="EC" id="2.7.4.14"/>
    </reaction>
</comment>
<comment type="catalytic activity">
    <reaction>
        <text>a 2'-deoxyribonucleoside 5'-diphosphate + ATP = a 2'-deoxyribonucleoside 5'-triphosphate + ADP</text>
        <dbReference type="Rhea" id="RHEA:44640"/>
        <dbReference type="ChEBI" id="CHEBI:30616"/>
        <dbReference type="ChEBI" id="CHEBI:61560"/>
        <dbReference type="ChEBI" id="CHEBI:73316"/>
        <dbReference type="ChEBI" id="CHEBI:456216"/>
        <dbReference type="EC" id="2.7.4.6"/>
    </reaction>
</comment>
<comment type="catalytic activity">
    <reaction>
        <text>a ribonucleoside 5'-diphosphate + ATP = a ribonucleoside 5'-triphosphate + ADP</text>
        <dbReference type="Rhea" id="RHEA:18113"/>
        <dbReference type="ChEBI" id="CHEBI:30616"/>
        <dbReference type="ChEBI" id="CHEBI:57930"/>
        <dbReference type="ChEBI" id="CHEBI:61557"/>
        <dbReference type="ChEBI" id="CHEBI:456216"/>
        <dbReference type="EC" id="2.7.4.6"/>
    </reaction>
</comment>
<comment type="subcellular location">
    <subcellularLocation>
        <location evidence="5">Mitochondrion</location>
    </subcellularLocation>
</comment>
<comment type="tissue specificity">
    <text evidence="5">Strongly expressed in the brain.</text>
</comment>
<comment type="induction">
    <text evidence="3 6">By lipopolysaccharides in macrophages and in primary microglia.</text>
</comment>
<comment type="disruption phenotype">
    <text evidence="5">Deletion mutant mice display calcification deposits in the brain. Neurons show reduced mitochondrial DNA copy number and impaired phosphorus and energy homeostasis, suggesting that dysregulation of mitochondrial function may promote the initiation and progressive development of brain calcification.</text>
</comment>
<comment type="similarity">
    <text evidence="7">Belongs to the thymidylate kinase family.</text>
</comment>
<comment type="sequence caution" evidence="7">
    <conflict type="miscellaneous discrepancy">
        <sequence resource="EMBL-CDS" id="AAA58770"/>
    </conflict>
    <text>Sequence differs due to frameshifts, sequencing errors and other discrepancies.</text>
</comment>
<comment type="sequence caution" evidence="7">
    <conflict type="erroneous initiation">
        <sequence resource="EMBL-CDS" id="AAH27329"/>
    </conflict>
</comment>
<comment type="sequence caution" evidence="7">
    <conflict type="erroneous initiation">
        <sequence resource="EMBL-CDS" id="AAH57565"/>
    </conflict>
</comment>
<comment type="sequence caution" evidence="7">
    <conflict type="frameshift">
        <sequence resource="EMBL-CDS" id="BAB23396"/>
    </conflict>
</comment>
<comment type="sequence caution" evidence="7">
    <conflict type="erroneous initiation">
        <sequence resource="EMBL-CDS" id="BAE29625"/>
    </conflict>
</comment>
<comment type="sequence caution" evidence="7">
    <conflict type="erroneous initiation">
        <sequence resource="EMBL-CDS" id="BAE29646"/>
    </conflict>
</comment>
<comment type="sequence caution" evidence="7">
    <conflict type="erroneous initiation">
        <sequence resource="EMBL-CDS" id="BAE29803"/>
    </conflict>
</comment>
<comment type="sequence caution" evidence="7">
    <conflict type="erroneous initiation">
        <sequence resource="EMBL-CDS" id="BAE29932"/>
    </conflict>
</comment>
<comment type="sequence caution" evidence="7">
    <conflict type="erroneous initiation">
        <sequence resource="EMBL-CDS" id="BAE31987"/>
    </conflict>
</comment>
<protein>
    <recommendedName>
        <fullName>UMP-CMP kinase 2, mitochondrial</fullName>
        <ecNumber>2.7.4.14</ecNumber>
    </recommendedName>
    <alternativeName>
        <fullName>Nucleoside-diphosphate kinase</fullName>
        <ecNumber>2.7.4.6</ecNumber>
    </alternativeName>
    <alternativeName>
        <fullName>Thymidylate kinase LPS-inducible member</fullName>
        <shortName>TYKi</shortName>
    </alternativeName>
</protein>
<evidence type="ECO:0000250" key="1">
    <source>
        <dbReference type="UniProtKB" id="Q5EBM0"/>
    </source>
</evidence>
<evidence type="ECO:0000255" key="2"/>
<evidence type="ECO:0000269" key="3">
    <source>
    </source>
</evidence>
<evidence type="ECO:0000269" key="4">
    <source>
    </source>
</evidence>
<evidence type="ECO:0000269" key="5">
    <source>
    </source>
</evidence>
<evidence type="ECO:0000269" key="6">
    <source>
    </source>
</evidence>
<evidence type="ECO:0000305" key="7"/>
<dbReference type="EC" id="2.7.4.14"/>
<dbReference type="EC" id="2.7.4.6"/>
<dbReference type="EMBL" id="AK004595">
    <property type="protein sequence ID" value="BAB23396.1"/>
    <property type="status" value="ALT_FRAME"/>
    <property type="molecule type" value="mRNA"/>
</dbReference>
<dbReference type="EMBL" id="AK153469">
    <property type="protein sequence ID" value="BAE32020.1"/>
    <property type="molecule type" value="mRNA"/>
</dbReference>
<dbReference type="EMBL" id="AK150512">
    <property type="protein sequence ID" value="BAE29625.1"/>
    <property type="status" value="ALT_INIT"/>
    <property type="molecule type" value="mRNA"/>
</dbReference>
<dbReference type="EMBL" id="AK150543">
    <property type="protein sequence ID" value="BAE29646.1"/>
    <property type="status" value="ALT_INIT"/>
    <property type="molecule type" value="mRNA"/>
</dbReference>
<dbReference type="EMBL" id="AK150725">
    <property type="protein sequence ID" value="BAE29803.1"/>
    <property type="status" value="ALT_INIT"/>
    <property type="molecule type" value="mRNA"/>
</dbReference>
<dbReference type="EMBL" id="AK150885">
    <property type="protein sequence ID" value="BAE29932.1"/>
    <property type="status" value="ALT_INIT"/>
    <property type="molecule type" value="mRNA"/>
</dbReference>
<dbReference type="EMBL" id="AK153429">
    <property type="protein sequence ID" value="BAE31987.1"/>
    <property type="status" value="ALT_INIT"/>
    <property type="molecule type" value="mRNA"/>
</dbReference>
<dbReference type="EMBL" id="BC027329">
    <property type="protein sequence ID" value="AAH27329.1"/>
    <property type="status" value="ALT_INIT"/>
    <property type="molecule type" value="mRNA"/>
</dbReference>
<dbReference type="EMBL" id="BC057565">
    <property type="protein sequence ID" value="AAH57565.1"/>
    <property type="status" value="ALT_INIT"/>
    <property type="molecule type" value="mRNA"/>
</dbReference>
<dbReference type="EMBL" id="L32973">
    <property type="protein sequence ID" value="AAA58770.1"/>
    <property type="status" value="ALT_SEQ"/>
    <property type="molecule type" value="mRNA"/>
</dbReference>
<dbReference type="CCDS" id="CCDS49039.1"/>
<dbReference type="RefSeq" id="NP_065582.3">
    <property type="nucleotide sequence ID" value="NM_020557.4"/>
</dbReference>
<dbReference type="SMR" id="Q3U5Q7"/>
<dbReference type="FunCoup" id="Q3U5Q7">
    <property type="interactions" value="1826"/>
</dbReference>
<dbReference type="STRING" id="10090.ENSMUSP00000020969"/>
<dbReference type="iPTMnet" id="Q3U5Q7"/>
<dbReference type="PhosphoSitePlus" id="Q3U5Q7"/>
<dbReference type="SwissPalm" id="Q3U5Q7"/>
<dbReference type="jPOST" id="Q3U5Q7"/>
<dbReference type="PaxDb" id="10090-ENSMUSP00000020969"/>
<dbReference type="PeptideAtlas" id="Q3U5Q7"/>
<dbReference type="ProteomicsDB" id="285502"/>
<dbReference type="Antibodypedia" id="26409">
    <property type="antibodies" value="89 antibodies from 21 providers"/>
</dbReference>
<dbReference type="DNASU" id="22169"/>
<dbReference type="Ensembl" id="ENSMUST00000020969.5">
    <property type="protein sequence ID" value="ENSMUSP00000020969.4"/>
    <property type="gene ID" value="ENSMUSG00000020638.9"/>
</dbReference>
<dbReference type="GeneID" id="22169"/>
<dbReference type="KEGG" id="mmu:22169"/>
<dbReference type="UCSC" id="uc007nfj.1">
    <property type="organism name" value="mouse"/>
</dbReference>
<dbReference type="AGR" id="MGI:99830"/>
<dbReference type="CTD" id="129607"/>
<dbReference type="MGI" id="MGI:99830">
    <property type="gene designation" value="Cmpk2"/>
</dbReference>
<dbReference type="VEuPathDB" id="HostDB:ENSMUSG00000020638"/>
<dbReference type="eggNOG" id="KOG3327">
    <property type="taxonomic scope" value="Eukaryota"/>
</dbReference>
<dbReference type="GeneTree" id="ENSGT00940000154030"/>
<dbReference type="HOGENOM" id="CLU_049896_0_0_1"/>
<dbReference type="InParanoid" id="Q3U5Q7"/>
<dbReference type="OMA" id="ECTSLIP"/>
<dbReference type="OrthoDB" id="425602at2759"/>
<dbReference type="PhylomeDB" id="Q3U5Q7"/>
<dbReference type="TreeFam" id="TF328875"/>
<dbReference type="BioGRID-ORCS" id="22169">
    <property type="hits" value="0 hits in 75 CRISPR screens"/>
</dbReference>
<dbReference type="PRO" id="PR:Q3U5Q7"/>
<dbReference type="Proteomes" id="UP000000589">
    <property type="component" value="Chromosome 12"/>
</dbReference>
<dbReference type="RNAct" id="Q3U5Q7">
    <property type="molecule type" value="protein"/>
</dbReference>
<dbReference type="Bgee" id="ENSMUSG00000020638">
    <property type="expression patterns" value="Expressed in small intestine Peyer's patch and 238 other cell types or tissues"/>
</dbReference>
<dbReference type="GO" id="GO:0005739">
    <property type="term" value="C:mitochondrion"/>
    <property type="evidence" value="ECO:0000250"/>
    <property type="project" value="UniProtKB"/>
</dbReference>
<dbReference type="GO" id="GO:0005654">
    <property type="term" value="C:nucleoplasm"/>
    <property type="evidence" value="ECO:0007669"/>
    <property type="project" value="Ensembl"/>
</dbReference>
<dbReference type="GO" id="GO:0004127">
    <property type="term" value="F:(d)CMP kinase activity"/>
    <property type="evidence" value="ECO:0000266"/>
    <property type="project" value="MGI"/>
</dbReference>
<dbReference type="GO" id="GO:0005524">
    <property type="term" value="F:ATP binding"/>
    <property type="evidence" value="ECO:0007669"/>
    <property type="project" value="UniProtKB-KW"/>
</dbReference>
<dbReference type="GO" id="GO:0036430">
    <property type="term" value="F:CMP kinase activity"/>
    <property type="evidence" value="ECO:0007669"/>
    <property type="project" value="RHEA"/>
</dbReference>
<dbReference type="GO" id="GO:0036431">
    <property type="term" value="F:dCMP kinase activity"/>
    <property type="evidence" value="ECO:0007669"/>
    <property type="project" value="RHEA"/>
</dbReference>
<dbReference type="GO" id="GO:0004798">
    <property type="term" value="F:dTMP kinase activity"/>
    <property type="evidence" value="ECO:0007669"/>
    <property type="project" value="Ensembl"/>
</dbReference>
<dbReference type="GO" id="GO:0004550">
    <property type="term" value="F:nucleoside diphosphate kinase activity"/>
    <property type="evidence" value="ECO:0000250"/>
    <property type="project" value="UniProtKB"/>
</dbReference>
<dbReference type="GO" id="GO:0033862">
    <property type="term" value="F:UMP kinase activity"/>
    <property type="evidence" value="ECO:0000266"/>
    <property type="project" value="MGI"/>
</dbReference>
<dbReference type="GO" id="GO:0071222">
    <property type="term" value="P:cellular response to lipopolysaccharide"/>
    <property type="evidence" value="ECO:0000314"/>
    <property type="project" value="MGI"/>
</dbReference>
<dbReference type="GO" id="GO:0006233">
    <property type="term" value="P:dTDP biosynthetic process"/>
    <property type="evidence" value="ECO:0007669"/>
    <property type="project" value="Ensembl"/>
</dbReference>
<dbReference type="GO" id="GO:0006227">
    <property type="term" value="P:dUDP biosynthetic process"/>
    <property type="evidence" value="ECO:0007669"/>
    <property type="project" value="Ensembl"/>
</dbReference>
<dbReference type="FunFam" id="3.40.50.300:FF:001133">
    <property type="entry name" value="UMP-CMP kinase 2, mitochondrial"/>
    <property type="match status" value="1"/>
</dbReference>
<dbReference type="Gene3D" id="3.40.50.300">
    <property type="entry name" value="P-loop containing nucleotide triphosphate hydrolases"/>
    <property type="match status" value="1"/>
</dbReference>
<dbReference type="InterPro" id="IPR027417">
    <property type="entry name" value="P-loop_NTPase"/>
</dbReference>
<dbReference type="InterPro" id="IPR039430">
    <property type="entry name" value="Thymidylate_kin-like_dom"/>
</dbReference>
<dbReference type="InterPro" id="IPR014505">
    <property type="entry name" value="UMP-CMP_kinase_2"/>
</dbReference>
<dbReference type="PANTHER" id="PTHR10344">
    <property type="entry name" value="THYMIDYLATE KINASE"/>
    <property type="match status" value="1"/>
</dbReference>
<dbReference type="PANTHER" id="PTHR10344:SF4">
    <property type="entry name" value="UMP-CMP KINASE 2, MITOCHONDRIAL"/>
    <property type="match status" value="1"/>
</dbReference>
<dbReference type="Pfam" id="PF02223">
    <property type="entry name" value="Thymidylate_kin"/>
    <property type="match status" value="1"/>
</dbReference>
<dbReference type="PIRSF" id="PIRSF019736">
    <property type="entry name" value="dTMP_TKRP1"/>
    <property type="match status" value="1"/>
</dbReference>
<dbReference type="SUPFAM" id="SSF52540">
    <property type="entry name" value="P-loop containing nucleoside triphosphate hydrolases"/>
    <property type="match status" value="1"/>
</dbReference>
<accession>Q3U5Q7</accession>
<accession>Q3UCI7</accession>
<accession>Q5XKG5</accession>
<accession>Q62316</accession>
<accession>Q6PFG7</accession>
<accession>Q9DC34</accession>
<name>CMPK2_MOUSE</name>
<organism>
    <name type="scientific">Mus musculus</name>
    <name type="common">Mouse</name>
    <dbReference type="NCBI Taxonomy" id="10090"/>
    <lineage>
        <taxon>Eukaryota</taxon>
        <taxon>Metazoa</taxon>
        <taxon>Chordata</taxon>
        <taxon>Craniata</taxon>
        <taxon>Vertebrata</taxon>
        <taxon>Euteleostomi</taxon>
        <taxon>Mammalia</taxon>
        <taxon>Eutheria</taxon>
        <taxon>Euarchontoglires</taxon>
        <taxon>Glires</taxon>
        <taxon>Rodentia</taxon>
        <taxon>Myomorpha</taxon>
        <taxon>Muroidea</taxon>
        <taxon>Muridae</taxon>
        <taxon>Murinae</taxon>
        <taxon>Mus</taxon>
        <taxon>Mus</taxon>
    </lineage>
</organism>
<sequence>MALISRPRAPLWLGRLSRRLCGRHQACMGTMARPRRFTVELPDCSLTHFVLGDATDHRDARLAELLGPPGRSYALCVPLAPGEGCGPRVQAARVHHRLLQQLRRGPLQRCQLSKLLGYGPGDQAGEAQHGFLLRDPCDHPDTRRDLLQLLGSCQEAARPQLAEFQADSQGLLWQRLWELQGDRQVQVDCACVLPAQEPHLHPLLPDLLNSAVFQDRDAARAVLEECTSFIPEARAVLDLVDQCPKEVQKGKFQVIAIEGLDATGKTTLTQSVSESLKAVLLQSPPPCISQWRKIFDDEPTIIRRAFYSLGNYLVASEIAKESTNFPVIVDRYWHSTATYAIATEVSGGLQYLPPAHHPVYQWPGDLLKPDLVLLLTVNSEERVRRLQGRGQEKTKEEAELEANNVFRQKVEMTYQRMENPSCHLVDASPSRETVLQKVLELIQSSGR</sequence>
<feature type="transit peptide" description="Mitochondrion" evidence="2">
    <location>
        <begin position="1"/>
        <end position="73"/>
    </location>
</feature>
<feature type="chain" id="PRO_0000331525" description="UMP-CMP kinase 2, mitochondrial">
    <location>
        <begin position="74"/>
        <end position="447"/>
    </location>
</feature>
<feature type="coiled-coil region" evidence="2">
    <location>
        <begin position="380"/>
        <end position="412"/>
    </location>
</feature>
<feature type="binding site" evidence="2">
    <location>
        <begin position="259"/>
        <end position="266"/>
    </location>
    <ligand>
        <name>ATP</name>
        <dbReference type="ChEBI" id="CHEBI:30616"/>
    </ligand>
</feature>
<feature type="mutagenesis site" description="Catalytically inactive with subsequent loss of NLRP3 inflammasome activation." evidence="4">
    <original>D</original>
    <variation>E</variation>
    <location>
        <position position="330"/>
    </location>
</feature>
<feature type="sequence conflict" description="In Ref. 1; BAE29625." evidence="7" ref="1">
    <original>G</original>
    <variation>R</variation>
    <location>
        <position position="14"/>
    </location>
</feature>
<feature type="sequence conflict" description="In Ref. 1; BAE32020." evidence="7" ref="1">
    <original>R</original>
    <variation>K</variation>
    <location>
        <position position="183"/>
    </location>
</feature>
<feature type="sequence conflict" description="In Ref. 1; BAE32020." evidence="7" ref="1">
    <original>E</original>
    <variation>G</variation>
    <location>
        <position position="225"/>
    </location>
</feature>
<feature type="sequence conflict" description="In Ref. 1; BAE29625." evidence="7" ref="1">
    <original>E</original>
    <variation>G</variation>
    <location>
        <position position="317"/>
    </location>
</feature>